<keyword id="KW-0067">ATP-binding</keyword>
<keyword id="KW-0315">Glutamine amidotransferase</keyword>
<keyword id="KW-0332">GMP biosynthesis</keyword>
<keyword id="KW-0436">Ligase</keyword>
<keyword id="KW-0547">Nucleotide-binding</keyword>
<keyword id="KW-0658">Purine biosynthesis</keyword>
<proteinExistence type="inferred from homology"/>
<gene>
    <name evidence="1" type="primary">guaA</name>
    <name type="ordered locus">P9303_00451</name>
</gene>
<evidence type="ECO:0000255" key="1">
    <source>
        <dbReference type="HAMAP-Rule" id="MF_00344"/>
    </source>
</evidence>
<name>GUAA_PROM3</name>
<sequence length="528" mass="59069">MSNSQSEGQRQPAIVILDFGSQYSELIARRVRETEVYSLVMSYSTSADELRQLAPKGIILSGGPSSVYAERAPLCDPNIWDLGIPVLGVCYGMQLMVQQLGGRVEMATGKAEYGKAPLEIDDPTDLLTNVENGSTMWMSHGDSVRALPEGFVRLAHTANTPDAAVAYHTRSLYGVQFHPEVVHSTDGMSLIRNFVYHICGCEPDWTTTAFIEEAVSQVRSQVGDKRVLLALSGGVDSSTLAFLLKKAIGDQLTCMFIDQGFMRKGEPEFLMDFFDRKFNINVEYINARQRFISKLNGIVDPEEKRKIIGTEFIRVFEEESNRLGPFDYLAQGTLYPDVIESAGTNIDPKTGERVAVKIKSHHNVGGLPKDLQFKLVEPLRRLFKDEVRKVGRSLGLPEEIVRRHPFPGPGLAIRILGEVTDEKLNCLRDADLIVREEIREAGLYHEIWQAFAVLLPVRSVGVMGDQRTYAWPIVLRCVSSEDGMTADWSRLPDELLERISNRIVNEVRGVNRVVLDITSKPPGTIEWE</sequence>
<protein>
    <recommendedName>
        <fullName evidence="1">GMP synthase [glutamine-hydrolyzing]</fullName>
        <ecNumber evidence="1">6.3.5.2</ecNumber>
    </recommendedName>
    <alternativeName>
        <fullName evidence="1">GMP synthetase</fullName>
    </alternativeName>
    <alternativeName>
        <fullName evidence="1">Glutamine amidotransferase</fullName>
    </alternativeName>
</protein>
<dbReference type="EC" id="6.3.5.2" evidence="1"/>
<dbReference type="EMBL" id="CP000554">
    <property type="protein sequence ID" value="ABM76802.1"/>
    <property type="molecule type" value="Genomic_DNA"/>
</dbReference>
<dbReference type="RefSeq" id="WP_011824735.1">
    <property type="nucleotide sequence ID" value="NC_008820.1"/>
</dbReference>
<dbReference type="SMR" id="A2C5P2"/>
<dbReference type="STRING" id="59922.P9303_00451"/>
<dbReference type="MEROPS" id="C26.957"/>
<dbReference type="KEGG" id="pmf:P9303_00451"/>
<dbReference type="HOGENOM" id="CLU_014340_0_5_3"/>
<dbReference type="BioCyc" id="PMAR59922:G1G80-48-MONOMER"/>
<dbReference type="UniPathway" id="UPA00189">
    <property type="reaction ID" value="UER00296"/>
</dbReference>
<dbReference type="Proteomes" id="UP000002274">
    <property type="component" value="Chromosome"/>
</dbReference>
<dbReference type="GO" id="GO:0005829">
    <property type="term" value="C:cytosol"/>
    <property type="evidence" value="ECO:0007669"/>
    <property type="project" value="TreeGrafter"/>
</dbReference>
<dbReference type="GO" id="GO:0005524">
    <property type="term" value="F:ATP binding"/>
    <property type="evidence" value="ECO:0007669"/>
    <property type="project" value="UniProtKB-UniRule"/>
</dbReference>
<dbReference type="GO" id="GO:0003921">
    <property type="term" value="F:GMP synthase activity"/>
    <property type="evidence" value="ECO:0007669"/>
    <property type="project" value="InterPro"/>
</dbReference>
<dbReference type="CDD" id="cd01742">
    <property type="entry name" value="GATase1_GMP_Synthase"/>
    <property type="match status" value="1"/>
</dbReference>
<dbReference type="CDD" id="cd01997">
    <property type="entry name" value="GMP_synthase_C"/>
    <property type="match status" value="1"/>
</dbReference>
<dbReference type="FunFam" id="3.30.300.10:FF:000002">
    <property type="entry name" value="GMP synthase [glutamine-hydrolyzing]"/>
    <property type="match status" value="1"/>
</dbReference>
<dbReference type="FunFam" id="3.40.50.620:FF:000001">
    <property type="entry name" value="GMP synthase [glutamine-hydrolyzing]"/>
    <property type="match status" value="1"/>
</dbReference>
<dbReference type="FunFam" id="3.40.50.880:FF:000001">
    <property type="entry name" value="GMP synthase [glutamine-hydrolyzing]"/>
    <property type="match status" value="1"/>
</dbReference>
<dbReference type="Gene3D" id="3.30.300.10">
    <property type="match status" value="1"/>
</dbReference>
<dbReference type="Gene3D" id="3.40.50.880">
    <property type="match status" value="1"/>
</dbReference>
<dbReference type="Gene3D" id="3.40.50.620">
    <property type="entry name" value="HUPs"/>
    <property type="match status" value="1"/>
</dbReference>
<dbReference type="HAMAP" id="MF_00344">
    <property type="entry name" value="GMP_synthase"/>
    <property type="match status" value="1"/>
</dbReference>
<dbReference type="InterPro" id="IPR029062">
    <property type="entry name" value="Class_I_gatase-like"/>
</dbReference>
<dbReference type="InterPro" id="IPR017926">
    <property type="entry name" value="GATASE"/>
</dbReference>
<dbReference type="InterPro" id="IPR001674">
    <property type="entry name" value="GMP_synth_C"/>
</dbReference>
<dbReference type="InterPro" id="IPR004739">
    <property type="entry name" value="GMP_synth_GATase"/>
</dbReference>
<dbReference type="InterPro" id="IPR022955">
    <property type="entry name" value="GMP_synthase"/>
</dbReference>
<dbReference type="InterPro" id="IPR025777">
    <property type="entry name" value="GMPS_ATP_PPase_dom"/>
</dbReference>
<dbReference type="InterPro" id="IPR022310">
    <property type="entry name" value="NAD/GMP_synthase"/>
</dbReference>
<dbReference type="InterPro" id="IPR014729">
    <property type="entry name" value="Rossmann-like_a/b/a_fold"/>
</dbReference>
<dbReference type="NCBIfam" id="TIGR00884">
    <property type="entry name" value="guaA_Cterm"/>
    <property type="match status" value="1"/>
</dbReference>
<dbReference type="NCBIfam" id="TIGR00888">
    <property type="entry name" value="guaA_Nterm"/>
    <property type="match status" value="1"/>
</dbReference>
<dbReference type="NCBIfam" id="NF000848">
    <property type="entry name" value="PRK00074.1"/>
    <property type="match status" value="1"/>
</dbReference>
<dbReference type="PANTHER" id="PTHR11922:SF2">
    <property type="entry name" value="GMP SYNTHASE [GLUTAMINE-HYDROLYZING]"/>
    <property type="match status" value="1"/>
</dbReference>
<dbReference type="PANTHER" id="PTHR11922">
    <property type="entry name" value="GMP SYNTHASE-RELATED"/>
    <property type="match status" value="1"/>
</dbReference>
<dbReference type="Pfam" id="PF00117">
    <property type="entry name" value="GATase"/>
    <property type="match status" value="1"/>
</dbReference>
<dbReference type="Pfam" id="PF00958">
    <property type="entry name" value="GMP_synt_C"/>
    <property type="match status" value="1"/>
</dbReference>
<dbReference type="Pfam" id="PF02540">
    <property type="entry name" value="NAD_synthase"/>
    <property type="match status" value="1"/>
</dbReference>
<dbReference type="PRINTS" id="PR00097">
    <property type="entry name" value="ANTSNTHASEII"/>
</dbReference>
<dbReference type="PRINTS" id="PR00099">
    <property type="entry name" value="CPSGATASE"/>
</dbReference>
<dbReference type="PRINTS" id="PR00096">
    <property type="entry name" value="GATASE"/>
</dbReference>
<dbReference type="SUPFAM" id="SSF52402">
    <property type="entry name" value="Adenine nucleotide alpha hydrolases-like"/>
    <property type="match status" value="1"/>
</dbReference>
<dbReference type="SUPFAM" id="SSF52317">
    <property type="entry name" value="Class I glutamine amidotransferase-like"/>
    <property type="match status" value="1"/>
</dbReference>
<dbReference type="SUPFAM" id="SSF54810">
    <property type="entry name" value="GMP synthetase C-terminal dimerisation domain"/>
    <property type="match status" value="1"/>
</dbReference>
<dbReference type="PROSITE" id="PS51273">
    <property type="entry name" value="GATASE_TYPE_1"/>
    <property type="match status" value="1"/>
</dbReference>
<dbReference type="PROSITE" id="PS51553">
    <property type="entry name" value="GMPS_ATP_PPASE"/>
    <property type="match status" value="1"/>
</dbReference>
<organism>
    <name type="scientific">Prochlorococcus marinus (strain MIT 9303)</name>
    <dbReference type="NCBI Taxonomy" id="59922"/>
    <lineage>
        <taxon>Bacteria</taxon>
        <taxon>Bacillati</taxon>
        <taxon>Cyanobacteriota</taxon>
        <taxon>Cyanophyceae</taxon>
        <taxon>Synechococcales</taxon>
        <taxon>Prochlorococcaceae</taxon>
        <taxon>Prochlorococcus</taxon>
    </lineage>
</organism>
<accession>A2C5P2</accession>
<feature type="chain" id="PRO_1000120360" description="GMP synthase [glutamine-hydrolyzing]">
    <location>
        <begin position="1"/>
        <end position="528"/>
    </location>
</feature>
<feature type="domain" description="Glutamine amidotransferase type-1" evidence="1">
    <location>
        <begin position="13"/>
        <end position="204"/>
    </location>
</feature>
<feature type="domain" description="GMPS ATP-PPase" evidence="1">
    <location>
        <begin position="205"/>
        <end position="403"/>
    </location>
</feature>
<feature type="active site" description="Nucleophile" evidence="1">
    <location>
        <position position="90"/>
    </location>
</feature>
<feature type="active site" evidence="1">
    <location>
        <position position="178"/>
    </location>
</feature>
<feature type="active site" evidence="1">
    <location>
        <position position="180"/>
    </location>
</feature>
<feature type="binding site" evidence="1">
    <location>
        <begin position="232"/>
        <end position="238"/>
    </location>
    <ligand>
        <name>ATP</name>
        <dbReference type="ChEBI" id="CHEBI:30616"/>
    </ligand>
</feature>
<reference key="1">
    <citation type="journal article" date="2007" name="PLoS Genet.">
        <title>Patterns and implications of gene gain and loss in the evolution of Prochlorococcus.</title>
        <authorList>
            <person name="Kettler G.C."/>
            <person name="Martiny A.C."/>
            <person name="Huang K."/>
            <person name="Zucker J."/>
            <person name="Coleman M.L."/>
            <person name="Rodrigue S."/>
            <person name="Chen F."/>
            <person name="Lapidus A."/>
            <person name="Ferriera S."/>
            <person name="Johnson J."/>
            <person name="Steglich C."/>
            <person name="Church G.M."/>
            <person name="Richardson P."/>
            <person name="Chisholm S.W."/>
        </authorList>
    </citation>
    <scope>NUCLEOTIDE SEQUENCE [LARGE SCALE GENOMIC DNA]</scope>
    <source>
        <strain>MIT 9303</strain>
    </source>
</reference>
<comment type="function">
    <text evidence="1">Catalyzes the synthesis of GMP from XMP.</text>
</comment>
<comment type="catalytic activity">
    <reaction evidence="1">
        <text>XMP + L-glutamine + ATP + H2O = GMP + L-glutamate + AMP + diphosphate + 2 H(+)</text>
        <dbReference type="Rhea" id="RHEA:11680"/>
        <dbReference type="ChEBI" id="CHEBI:15377"/>
        <dbReference type="ChEBI" id="CHEBI:15378"/>
        <dbReference type="ChEBI" id="CHEBI:29985"/>
        <dbReference type="ChEBI" id="CHEBI:30616"/>
        <dbReference type="ChEBI" id="CHEBI:33019"/>
        <dbReference type="ChEBI" id="CHEBI:57464"/>
        <dbReference type="ChEBI" id="CHEBI:58115"/>
        <dbReference type="ChEBI" id="CHEBI:58359"/>
        <dbReference type="ChEBI" id="CHEBI:456215"/>
        <dbReference type="EC" id="6.3.5.2"/>
    </reaction>
</comment>
<comment type="pathway">
    <text evidence="1">Purine metabolism; GMP biosynthesis; GMP from XMP (L-Gln route): step 1/1.</text>
</comment>
<comment type="subunit">
    <text evidence="1">Homodimer.</text>
</comment>